<name>IHFB_RHOCS</name>
<sequence>MTKSELILRLAERNPHLYQRDVEKIVTTIFDEITDALARGDRVELRGFGAFSVKKRDARLGRNPRTGETVDVNQKFIPFFKTGKQLRERLNTD</sequence>
<protein>
    <recommendedName>
        <fullName evidence="1">Integration host factor subunit beta</fullName>
        <shortName evidence="1">IHF-beta</shortName>
    </recommendedName>
</protein>
<keyword id="KW-0233">DNA recombination</keyword>
<keyword id="KW-0238">DNA-binding</keyword>
<keyword id="KW-1185">Reference proteome</keyword>
<keyword id="KW-0804">Transcription</keyword>
<keyword id="KW-0805">Transcription regulation</keyword>
<keyword id="KW-0810">Translation regulation</keyword>
<reference key="1">
    <citation type="submission" date="2007-03" db="EMBL/GenBank/DDBJ databases">
        <title>Genome sequence of Rhodospirillum centenum.</title>
        <authorList>
            <person name="Touchman J.W."/>
            <person name="Bauer C."/>
            <person name="Blankenship R.E."/>
        </authorList>
    </citation>
    <scope>NUCLEOTIDE SEQUENCE [LARGE SCALE GENOMIC DNA]</scope>
    <source>
        <strain>ATCC 51521 / SW</strain>
    </source>
</reference>
<proteinExistence type="inferred from homology"/>
<accession>B6IUP4</accession>
<organism>
    <name type="scientific">Rhodospirillum centenum (strain ATCC 51521 / SW)</name>
    <dbReference type="NCBI Taxonomy" id="414684"/>
    <lineage>
        <taxon>Bacteria</taxon>
        <taxon>Pseudomonadati</taxon>
        <taxon>Pseudomonadota</taxon>
        <taxon>Alphaproteobacteria</taxon>
        <taxon>Rhodospirillales</taxon>
        <taxon>Rhodospirillaceae</taxon>
        <taxon>Rhodospirillum</taxon>
    </lineage>
</organism>
<evidence type="ECO:0000255" key="1">
    <source>
        <dbReference type="HAMAP-Rule" id="MF_00381"/>
    </source>
</evidence>
<comment type="function">
    <text evidence="1">This protein is one of the two subunits of integration host factor, a specific DNA-binding protein that functions in genetic recombination as well as in transcriptional and translational control.</text>
</comment>
<comment type="subunit">
    <text evidence="1">Heterodimer of an alpha and a beta chain.</text>
</comment>
<comment type="similarity">
    <text evidence="1">Belongs to the bacterial histone-like protein family.</text>
</comment>
<feature type="chain" id="PRO_1000122232" description="Integration host factor subunit beta">
    <location>
        <begin position="1"/>
        <end position="93"/>
    </location>
</feature>
<gene>
    <name evidence="1" type="primary">ihfB</name>
    <name evidence="1" type="synonym">himD</name>
    <name type="ordered locus">RC1_2486</name>
</gene>
<dbReference type="EMBL" id="CP000613">
    <property type="protein sequence ID" value="ACI99869.1"/>
    <property type="molecule type" value="Genomic_DNA"/>
</dbReference>
<dbReference type="RefSeq" id="WP_012567651.1">
    <property type="nucleotide sequence ID" value="NC_011420.2"/>
</dbReference>
<dbReference type="SMR" id="B6IUP4"/>
<dbReference type="STRING" id="414684.RC1_2486"/>
<dbReference type="KEGG" id="rce:RC1_2486"/>
<dbReference type="eggNOG" id="COG0776">
    <property type="taxonomic scope" value="Bacteria"/>
</dbReference>
<dbReference type="HOGENOM" id="CLU_105066_2_0_5"/>
<dbReference type="OrthoDB" id="9804203at2"/>
<dbReference type="Proteomes" id="UP000001591">
    <property type="component" value="Chromosome"/>
</dbReference>
<dbReference type="GO" id="GO:0005694">
    <property type="term" value="C:chromosome"/>
    <property type="evidence" value="ECO:0007669"/>
    <property type="project" value="InterPro"/>
</dbReference>
<dbReference type="GO" id="GO:0005829">
    <property type="term" value="C:cytosol"/>
    <property type="evidence" value="ECO:0007669"/>
    <property type="project" value="TreeGrafter"/>
</dbReference>
<dbReference type="GO" id="GO:0003677">
    <property type="term" value="F:DNA binding"/>
    <property type="evidence" value="ECO:0007669"/>
    <property type="project" value="UniProtKB-UniRule"/>
</dbReference>
<dbReference type="GO" id="GO:0030527">
    <property type="term" value="F:structural constituent of chromatin"/>
    <property type="evidence" value="ECO:0007669"/>
    <property type="project" value="InterPro"/>
</dbReference>
<dbReference type="GO" id="GO:0006310">
    <property type="term" value="P:DNA recombination"/>
    <property type="evidence" value="ECO:0007669"/>
    <property type="project" value="UniProtKB-UniRule"/>
</dbReference>
<dbReference type="GO" id="GO:0006355">
    <property type="term" value="P:regulation of DNA-templated transcription"/>
    <property type="evidence" value="ECO:0007669"/>
    <property type="project" value="UniProtKB-UniRule"/>
</dbReference>
<dbReference type="GO" id="GO:0006417">
    <property type="term" value="P:regulation of translation"/>
    <property type="evidence" value="ECO:0007669"/>
    <property type="project" value="UniProtKB-UniRule"/>
</dbReference>
<dbReference type="CDD" id="cd13836">
    <property type="entry name" value="IHF_B"/>
    <property type="match status" value="1"/>
</dbReference>
<dbReference type="Gene3D" id="4.10.520.10">
    <property type="entry name" value="IHF-like DNA-binding proteins"/>
    <property type="match status" value="1"/>
</dbReference>
<dbReference type="HAMAP" id="MF_00381">
    <property type="entry name" value="IHF_beta"/>
    <property type="match status" value="1"/>
</dbReference>
<dbReference type="InterPro" id="IPR000119">
    <property type="entry name" value="Hist_DNA-bd"/>
</dbReference>
<dbReference type="InterPro" id="IPR020816">
    <property type="entry name" value="Histone-like_DNA-bd_CS"/>
</dbReference>
<dbReference type="InterPro" id="IPR010992">
    <property type="entry name" value="IHF-like_DNA-bd_dom_sf"/>
</dbReference>
<dbReference type="InterPro" id="IPR005685">
    <property type="entry name" value="IHF_beta"/>
</dbReference>
<dbReference type="NCBIfam" id="TIGR00988">
    <property type="entry name" value="hip"/>
    <property type="match status" value="1"/>
</dbReference>
<dbReference type="NCBIfam" id="NF001222">
    <property type="entry name" value="PRK00199.1"/>
    <property type="match status" value="1"/>
</dbReference>
<dbReference type="PANTHER" id="PTHR33175">
    <property type="entry name" value="DNA-BINDING PROTEIN HU"/>
    <property type="match status" value="1"/>
</dbReference>
<dbReference type="PANTHER" id="PTHR33175:SF5">
    <property type="entry name" value="INTEGRATION HOST FACTOR SUBUNIT BETA"/>
    <property type="match status" value="1"/>
</dbReference>
<dbReference type="Pfam" id="PF00216">
    <property type="entry name" value="Bac_DNA_binding"/>
    <property type="match status" value="1"/>
</dbReference>
<dbReference type="PRINTS" id="PR01727">
    <property type="entry name" value="DNABINDINGHU"/>
</dbReference>
<dbReference type="SMART" id="SM00411">
    <property type="entry name" value="BHL"/>
    <property type="match status" value="1"/>
</dbReference>
<dbReference type="SUPFAM" id="SSF47729">
    <property type="entry name" value="IHF-like DNA-binding proteins"/>
    <property type="match status" value="1"/>
</dbReference>
<dbReference type="PROSITE" id="PS00045">
    <property type="entry name" value="HISTONE_LIKE"/>
    <property type="match status" value="1"/>
</dbReference>